<name>BYR3_SCHPO</name>
<dbReference type="EMBL" id="S45038">
    <property type="protein sequence ID" value="AAB23116.1"/>
    <property type="molecule type" value="Genomic_DNA"/>
</dbReference>
<dbReference type="EMBL" id="CU329670">
    <property type="protein sequence ID" value="CAA93542.1"/>
    <property type="molecule type" value="Genomic_DNA"/>
</dbReference>
<dbReference type="PIR" id="T37622">
    <property type="entry name" value="T37622"/>
</dbReference>
<dbReference type="RefSeq" id="NP_593680.1">
    <property type="nucleotide sequence ID" value="NM_001019112.2"/>
</dbReference>
<dbReference type="BioGRID" id="279276">
    <property type="interactions" value="34"/>
</dbReference>
<dbReference type="FunCoup" id="P36627">
    <property type="interactions" value="417"/>
</dbReference>
<dbReference type="STRING" id="284812.P36627"/>
<dbReference type="iPTMnet" id="P36627"/>
<dbReference type="PaxDb" id="4896-SPAC13D6.02c.1"/>
<dbReference type="EnsemblFungi" id="SPAC13D6.02c.1">
    <property type="protein sequence ID" value="SPAC13D6.02c.1:pep"/>
    <property type="gene ID" value="SPAC13D6.02c"/>
</dbReference>
<dbReference type="GeneID" id="2542829"/>
<dbReference type="KEGG" id="spo:2542829"/>
<dbReference type="PomBase" id="SPAC13D6.02c">
    <property type="gene designation" value="byr3"/>
</dbReference>
<dbReference type="VEuPathDB" id="FungiDB:SPAC13D6.02c"/>
<dbReference type="eggNOG" id="KOG4400">
    <property type="taxonomic scope" value="Eukaryota"/>
</dbReference>
<dbReference type="HOGENOM" id="CLU_058879_2_0_1"/>
<dbReference type="InParanoid" id="P36627"/>
<dbReference type="OMA" id="KGNPTCY"/>
<dbReference type="PhylomeDB" id="P36627"/>
<dbReference type="PRO" id="PR:P36627"/>
<dbReference type="Proteomes" id="UP000002485">
    <property type="component" value="Chromosome I"/>
</dbReference>
<dbReference type="GO" id="GO:0005737">
    <property type="term" value="C:cytoplasm"/>
    <property type="evidence" value="ECO:0000318"/>
    <property type="project" value="GO_Central"/>
</dbReference>
<dbReference type="GO" id="GO:0005829">
    <property type="term" value="C:cytosol"/>
    <property type="evidence" value="ECO:0007005"/>
    <property type="project" value="PomBase"/>
</dbReference>
<dbReference type="GO" id="GO:0005730">
    <property type="term" value="C:nucleolus"/>
    <property type="evidence" value="ECO:0007005"/>
    <property type="project" value="PomBase"/>
</dbReference>
<dbReference type="GO" id="GO:0003677">
    <property type="term" value="F:DNA binding"/>
    <property type="evidence" value="ECO:0007669"/>
    <property type="project" value="UniProtKB-KW"/>
</dbReference>
<dbReference type="GO" id="GO:0003729">
    <property type="term" value="F:mRNA binding"/>
    <property type="evidence" value="ECO:0000318"/>
    <property type="project" value="GO_Central"/>
</dbReference>
<dbReference type="GO" id="GO:0003727">
    <property type="term" value="F:single-stranded RNA binding"/>
    <property type="evidence" value="ECO:0000318"/>
    <property type="project" value="GO_Central"/>
</dbReference>
<dbReference type="GO" id="GO:0008494">
    <property type="term" value="F:translation activator activity"/>
    <property type="evidence" value="ECO:0000266"/>
    <property type="project" value="PomBase"/>
</dbReference>
<dbReference type="GO" id="GO:0045182">
    <property type="term" value="F:translation regulator activity"/>
    <property type="evidence" value="ECO:0000318"/>
    <property type="project" value="GO_Central"/>
</dbReference>
<dbReference type="GO" id="GO:0008270">
    <property type="term" value="F:zinc ion binding"/>
    <property type="evidence" value="ECO:0007669"/>
    <property type="project" value="UniProtKB-KW"/>
</dbReference>
<dbReference type="GO" id="GO:2000767">
    <property type="term" value="P:positive regulation of cytoplasmic translation"/>
    <property type="evidence" value="ECO:0000318"/>
    <property type="project" value="GO_Central"/>
</dbReference>
<dbReference type="FunFam" id="4.10.60.10:FF:000118">
    <property type="entry name" value="DNA-binding protein"/>
    <property type="match status" value="1"/>
</dbReference>
<dbReference type="Gene3D" id="4.10.60.10">
    <property type="entry name" value="Zinc finger, CCHC-type"/>
    <property type="match status" value="5"/>
</dbReference>
<dbReference type="InterPro" id="IPR001878">
    <property type="entry name" value="Znf_CCHC"/>
</dbReference>
<dbReference type="InterPro" id="IPR036875">
    <property type="entry name" value="Znf_CCHC_sf"/>
</dbReference>
<dbReference type="PANTHER" id="PTHR47103">
    <property type="entry name" value="DNA-BINDING PROTEIN"/>
    <property type="match status" value="1"/>
</dbReference>
<dbReference type="PANTHER" id="PTHR47103:SF8">
    <property type="entry name" value="DNA-BINDING PROTEIN"/>
    <property type="match status" value="1"/>
</dbReference>
<dbReference type="Pfam" id="PF00098">
    <property type="entry name" value="zf-CCHC"/>
    <property type="match status" value="7"/>
</dbReference>
<dbReference type="SMART" id="SM00343">
    <property type="entry name" value="ZnF_C2HC"/>
    <property type="match status" value="7"/>
</dbReference>
<dbReference type="SUPFAM" id="SSF57756">
    <property type="entry name" value="Retrovirus zinc finger-like domains"/>
    <property type="match status" value="4"/>
</dbReference>
<dbReference type="PROSITE" id="PS50158">
    <property type="entry name" value="ZF_CCHC"/>
    <property type="match status" value="7"/>
</dbReference>
<proteinExistence type="predicted"/>
<keyword id="KW-0238">DNA-binding</keyword>
<keyword id="KW-0479">Metal-binding</keyword>
<keyword id="KW-0539">Nucleus</keyword>
<keyword id="KW-0597">Phosphoprotein</keyword>
<keyword id="KW-1185">Reference proteome</keyword>
<keyword id="KW-0677">Repeat</keyword>
<keyword id="KW-0862">Zinc</keyword>
<keyword id="KW-0863">Zinc-finger</keyword>
<sequence>MESESVPTVPQTTRPGPRCYNCGENGHQARECTKGSICYNCNQTGHKASECTEPQQEKTCYACGTAGHLVRDCPSSPNPRQGAECYKCGRVGHIARDCRTNGQQSGGRFGGHRSNMNCYACGSYGHQARDCTMGVKCYSCGKIGHRSFECQQASDGQLCYKCNQPGHIAVNCTSPVIEA</sequence>
<evidence type="ECO:0000255" key="1">
    <source>
        <dbReference type="PROSITE-ProRule" id="PRU00047"/>
    </source>
</evidence>
<evidence type="ECO:0000305" key="2"/>
<gene>
    <name type="primary">byr3</name>
    <name type="ORF">SPAC13D6.02c</name>
</gene>
<reference key="1">
    <citation type="journal article" date="1992" name="Mol. Biol. Cell">
        <title>A gene encoding a protein with seven zinc finger domains acts on the sexual differentiation pathways of Schizosaccharomyces pombe.</title>
        <authorList>
            <person name="Xu H.-P."/>
            <person name="Rajavashisth T."/>
            <person name="Grewal N."/>
            <person name="Jung V."/>
            <person name="Riggs M."/>
            <person name="Rodgers L."/>
            <person name="Wigler M."/>
        </authorList>
    </citation>
    <scope>NUCLEOTIDE SEQUENCE [GENOMIC DNA]</scope>
    <source>
        <strain>SP870</strain>
    </source>
</reference>
<reference key="2">
    <citation type="journal article" date="2002" name="Nature">
        <title>The genome sequence of Schizosaccharomyces pombe.</title>
        <authorList>
            <person name="Wood V."/>
            <person name="Gwilliam R."/>
            <person name="Rajandream M.A."/>
            <person name="Lyne M.H."/>
            <person name="Lyne R."/>
            <person name="Stewart A."/>
            <person name="Sgouros J.G."/>
            <person name="Peat N."/>
            <person name="Hayles J."/>
            <person name="Baker S.G."/>
            <person name="Basham D."/>
            <person name="Bowman S."/>
            <person name="Brooks K."/>
            <person name="Brown D."/>
            <person name="Brown S."/>
            <person name="Chillingworth T."/>
            <person name="Churcher C.M."/>
            <person name="Collins M."/>
            <person name="Connor R."/>
            <person name="Cronin A."/>
            <person name="Davis P."/>
            <person name="Feltwell T."/>
            <person name="Fraser A."/>
            <person name="Gentles S."/>
            <person name="Goble A."/>
            <person name="Hamlin N."/>
            <person name="Harris D.E."/>
            <person name="Hidalgo J."/>
            <person name="Hodgson G."/>
            <person name="Holroyd S."/>
            <person name="Hornsby T."/>
            <person name="Howarth S."/>
            <person name="Huckle E.J."/>
            <person name="Hunt S."/>
            <person name="Jagels K."/>
            <person name="James K.D."/>
            <person name="Jones L."/>
            <person name="Jones M."/>
            <person name="Leather S."/>
            <person name="McDonald S."/>
            <person name="McLean J."/>
            <person name="Mooney P."/>
            <person name="Moule S."/>
            <person name="Mungall K.L."/>
            <person name="Murphy L.D."/>
            <person name="Niblett D."/>
            <person name="Odell C."/>
            <person name="Oliver K."/>
            <person name="O'Neil S."/>
            <person name="Pearson D."/>
            <person name="Quail M.A."/>
            <person name="Rabbinowitsch E."/>
            <person name="Rutherford K.M."/>
            <person name="Rutter S."/>
            <person name="Saunders D."/>
            <person name="Seeger K."/>
            <person name="Sharp S."/>
            <person name="Skelton J."/>
            <person name="Simmonds M.N."/>
            <person name="Squares R."/>
            <person name="Squares S."/>
            <person name="Stevens K."/>
            <person name="Taylor K."/>
            <person name="Taylor R.G."/>
            <person name="Tivey A."/>
            <person name="Walsh S.V."/>
            <person name="Warren T."/>
            <person name="Whitehead S."/>
            <person name="Woodward J.R."/>
            <person name="Volckaert G."/>
            <person name="Aert R."/>
            <person name="Robben J."/>
            <person name="Grymonprez B."/>
            <person name="Weltjens I."/>
            <person name="Vanstreels E."/>
            <person name="Rieger M."/>
            <person name="Schaefer M."/>
            <person name="Mueller-Auer S."/>
            <person name="Gabel C."/>
            <person name="Fuchs M."/>
            <person name="Duesterhoeft A."/>
            <person name="Fritzc C."/>
            <person name="Holzer E."/>
            <person name="Moestl D."/>
            <person name="Hilbert H."/>
            <person name="Borzym K."/>
            <person name="Langer I."/>
            <person name="Beck A."/>
            <person name="Lehrach H."/>
            <person name="Reinhardt R."/>
            <person name="Pohl T.M."/>
            <person name="Eger P."/>
            <person name="Zimmermann W."/>
            <person name="Wedler H."/>
            <person name="Wambutt R."/>
            <person name="Purnelle B."/>
            <person name="Goffeau A."/>
            <person name="Cadieu E."/>
            <person name="Dreano S."/>
            <person name="Gloux S."/>
            <person name="Lelaure V."/>
            <person name="Mottier S."/>
            <person name="Galibert F."/>
            <person name="Aves S.J."/>
            <person name="Xiang Z."/>
            <person name="Hunt C."/>
            <person name="Moore K."/>
            <person name="Hurst S.M."/>
            <person name="Lucas M."/>
            <person name="Rochet M."/>
            <person name="Gaillardin C."/>
            <person name="Tallada V.A."/>
            <person name="Garzon A."/>
            <person name="Thode G."/>
            <person name="Daga R.R."/>
            <person name="Cruzado L."/>
            <person name="Jimenez J."/>
            <person name="Sanchez M."/>
            <person name="del Rey F."/>
            <person name="Benito J."/>
            <person name="Dominguez A."/>
            <person name="Revuelta J.L."/>
            <person name="Moreno S."/>
            <person name="Armstrong J."/>
            <person name="Forsburg S.L."/>
            <person name="Cerutti L."/>
            <person name="Lowe T."/>
            <person name="McCombie W.R."/>
            <person name="Paulsen I."/>
            <person name="Potashkin J."/>
            <person name="Shpakovski G.V."/>
            <person name="Ussery D."/>
            <person name="Barrell B.G."/>
            <person name="Nurse P."/>
        </authorList>
    </citation>
    <scope>NUCLEOTIDE SEQUENCE [LARGE SCALE GENOMIC DNA]</scope>
    <source>
        <strain>972 / ATCC 24843</strain>
    </source>
</reference>
<protein>
    <recommendedName>
        <fullName>Cellular nucleic acid-binding protein homolog</fullName>
    </recommendedName>
</protein>
<organism>
    <name type="scientific">Schizosaccharomyces pombe (strain 972 / ATCC 24843)</name>
    <name type="common">Fission yeast</name>
    <dbReference type="NCBI Taxonomy" id="284812"/>
    <lineage>
        <taxon>Eukaryota</taxon>
        <taxon>Fungi</taxon>
        <taxon>Dikarya</taxon>
        <taxon>Ascomycota</taxon>
        <taxon>Taphrinomycotina</taxon>
        <taxon>Schizosaccharomycetes</taxon>
        <taxon>Schizosaccharomycetales</taxon>
        <taxon>Schizosaccharomycetaceae</taxon>
        <taxon>Schizosaccharomyces</taxon>
    </lineage>
</organism>
<feature type="chain" id="PRO_0000065031" description="Cellular nucleic acid-binding protein homolog">
    <location>
        <begin position="1"/>
        <end position="179"/>
    </location>
</feature>
<feature type="zinc finger region" description="CCHC-type 1" evidence="1">
    <location>
        <begin position="17"/>
        <end position="34"/>
    </location>
</feature>
<feature type="zinc finger region" description="CCHC-type 2" evidence="1">
    <location>
        <begin position="36"/>
        <end position="53"/>
    </location>
</feature>
<feature type="zinc finger region" description="CCHC-type 3" evidence="1">
    <location>
        <begin position="58"/>
        <end position="75"/>
    </location>
</feature>
<feature type="zinc finger region" description="CCHC-type 4" evidence="1">
    <location>
        <begin position="83"/>
        <end position="100"/>
    </location>
</feature>
<feature type="zinc finger region" description="CCHC-type 5" evidence="1">
    <location>
        <begin position="116"/>
        <end position="133"/>
    </location>
</feature>
<feature type="zinc finger region" description="CCHC-type 6" evidence="1">
    <location>
        <begin position="135"/>
        <end position="152"/>
    </location>
</feature>
<feature type="zinc finger region" description="CCHC-type 7" evidence="1">
    <location>
        <begin position="157"/>
        <end position="174"/>
    </location>
</feature>
<accession>P36627</accession>
<comment type="function">
    <text>Acts in the sexual differentiation pathway. Is required for efficient conjugation. Double-stranded DNA-binding protein.</text>
</comment>
<comment type="subcellular location">
    <subcellularLocation>
        <location evidence="2">Nucleus</location>
    </subcellularLocation>
</comment>
<comment type="PTM">
    <text>Phosphorylated.</text>
</comment>
<comment type="similarity">
    <text evidence="2">To human CNBP and to retroviral nucleic acid binding proteins (NBP).</text>
</comment>